<proteinExistence type="inferred from homology"/>
<evidence type="ECO:0000255" key="1">
    <source>
        <dbReference type="HAMAP-Rule" id="MF_00170"/>
    </source>
</evidence>
<accession>B4F0Q0</accession>
<gene>
    <name evidence="1" type="primary">rpiA</name>
    <name type="ordered locus">PMI2032</name>
</gene>
<comment type="function">
    <text evidence="1">Catalyzes the reversible conversion of ribose-5-phosphate to ribulose 5-phosphate.</text>
</comment>
<comment type="catalytic activity">
    <reaction evidence="1">
        <text>aldehydo-D-ribose 5-phosphate = D-ribulose 5-phosphate</text>
        <dbReference type="Rhea" id="RHEA:14657"/>
        <dbReference type="ChEBI" id="CHEBI:58121"/>
        <dbReference type="ChEBI" id="CHEBI:58273"/>
        <dbReference type="EC" id="5.3.1.6"/>
    </reaction>
</comment>
<comment type="pathway">
    <text evidence="1">Carbohydrate degradation; pentose phosphate pathway; D-ribose 5-phosphate from D-ribulose 5-phosphate (non-oxidative stage): step 1/1.</text>
</comment>
<comment type="subunit">
    <text evidence="1">Homodimer.</text>
</comment>
<comment type="similarity">
    <text evidence="1">Belongs to the ribose 5-phosphate isomerase family.</text>
</comment>
<dbReference type="EC" id="5.3.1.6" evidence="1"/>
<dbReference type="EMBL" id="AM942759">
    <property type="protein sequence ID" value="CAR44077.1"/>
    <property type="molecule type" value="Genomic_DNA"/>
</dbReference>
<dbReference type="RefSeq" id="WP_004244058.1">
    <property type="nucleotide sequence ID" value="NC_010554.1"/>
</dbReference>
<dbReference type="SMR" id="B4F0Q0"/>
<dbReference type="EnsemblBacteria" id="CAR44077">
    <property type="protein sequence ID" value="CAR44077"/>
    <property type="gene ID" value="PMI2032"/>
</dbReference>
<dbReference type="GeneID" id="6801436"/>
<dbReference type="KEGG" id="pmr:PMI2032"/>
<dbReference type="eggNOG" id="COG0120">
    <property type="taxonomic scope" value="Bacteria"/>
</dbReference>
<dbReference type="HOGENOM" id="CLU_056590_1_1_6"/>
<dbReference type="UniPathway" id="UPA00115">
    <property type="reaction ID" value="UER00412"/>
</dbReference>
<dbReference type="Proteomes" id="UP000008319">
    <property type="component" value="Chromosome"/>
</dbReference>
<dbReference type="GO" id="GO:0005829">
    <property type="term" value="C:cytosol"/>
    <property type="evidence" value="ECO:0007669"/>
    <property type="project" value="TreeGrafter"/>
</dbReference>
<dbReference type="GO" id="GO:0004751">
    <property type="term" value="F:ribose-5-phosphate isomerase activity"/>
    <property type="evidence" value="ECO:0007669"/>
    <property type="project" value="UniProtKB-UniRule"/>
</dbReference>
<dbReference type="GO" id="GO:0006014">
    <property type="term" value="P:D-ribose metabolic process"/>
    <property type="evidence" value="ECO:0007669"/>
    <property type="project" value="TreeGrafter"/>
</dbReference>
<dbReference type="GO" id="GO:0009052">
    <property type="term" value="P:pentose-phosphate shunt, non-oxidative branch"/>
    <property type="evidence" value="ECO:0007669"/>
    <property type="project" value="UniProtKB-UniRule"/>
</dbReference>
<dbReference type="CDD" id="cd01398">
    <property type="entry name" value="RPI_A"/>
    <property type="match status" value="1"/>
</dbReference>
<dbReference type="FunFam" id="3.30.70.260:FF:000004">
    <property type="entry name" value="Ribose-5-phosphate isomerase A"/>
    <property type="match status" value="1"/>
</dbReference>
<dbReference type="FunFam" id="3.40.50.1360:FF:000001">
    <property type="entry name" value="Ribose-5-phosphate isomerase A"/>
    <property type="match status" value="1"/>
</dbReference>
<dbReference type="Gene3D" id="3.30.70.260">
    <property type="match status" value="1"/>
</dbReference>
<dbReference type="Gene3D" id="3.40.50.1360">
    <property type="match status" value="1"/>
</dbReference>
<dbReference type="HAMAP" id="MF_00170">
    <property type="entry name" value="Rib_5P_isom_A"/>
    <property type="match status" value="1"/>
</dbReference>
<dbReference type="InterPro" id="IPR037171">
    <property type="entry name" value="NagB/RpiA_transferase-like"/>
</dbReference>
<dbReference type="InterPro" id="IPR020672">
    <property type="entry name" value="Ribose5P_isomerase_typA_subgr"/>
</dbReference>
<dbReference type="InterPro" id="IPR004788">
    <property type="entry name" value="Ribose5P_isomerase_type_A"/>
</dbReference>
<dbReference type="NCBIfam" id="NF001924">
    <property type="entry name" value="PRK00702.1"/>
    <property type="match status" value="1"/>
</dbReference>
<dbReference type="NCBIfam" id="TIGR00021">
    <property type="entry name" value="rpiA"/>
    <property type="match status" value="1"/>
</dbReference>
<dbReference type="PANTHER" id="PTHR11934">
    <property type="entry name" value="RIBOSE-5-PHOSPHATE ISOMERASE"/>
    <property type="match status" value="1"/>
</dbReference>
<dbReference type="PANTHER" id="PTHR11934:SF0">
    <property type="entry name" value="RIBOSE-5-PHOSPHATE ISOMERASE"/>
    <property type="match status" value="1"/>
</dbReference>
<dbReference type="Pfam" id="PF06026">
    <property type="entry name" value="Rib_5-P_isom_A"/>
    <property type="match status" value="1"/>
</dbReference>
<dbReference type="SUPFAM" id="SSF75445">
    <property type="entry name" value="D-ribose-5-phosphate isomerase (RpiA), lid domain"/>
    <property type="match status" value="1"/>
</dbReference>
<dbReference type="SUPFAM" id="SSF100950">
    <property type="entry name" value="NagB/RpiA/CoA transferase-like"/>
    <property type="match status" value="1"/>
</dbReference>
<protein>
    <recommendedName>
        <fullName evidence="1">Ribose-5-phosphate isomerase A</fullName>
        <ecNumber evidence="1">5.3.1.6</ecNumber>
    </recommendedName>
    <alternativeName>
        <fullName evidence="1">Phosphoriboisomerase A</fullName>
        <shortName evidence="1">PRI</shortName>
    </alternativeName>
</protein>
<keyword id="KW-0413">Isomerase</keyword>
<keyword id="KW-1185">Reference proteome</keyword>
<organism>
    <name type="scientific">Proteus mirabilis (strain HI4320)</name>
    <dbReference type="NCBI Taxonomy" id="529507"/>
    <lineage>
        <taxon>Bacteria</taxon>
        <taxon>Pseudomonadati</taxon>
        <taxon>Pseudomonadota</taxon>
        <taxon>Gammaproteobacteria</taxon>
        <taxon>Enterobacterales</taxon>
        <taxon>Morganellaceae</taxon>
        <taxon>Proteus</taxon>
    </lineage>
</organism>
<reference key="1">
    <citation type="journal article" date="2008" name="J. Bacteriol.">
        <title>Complete genome sequence of uropathogenic Proteus mirabilis, a master of both adherence and motility.</title>
        <authorList>
            <person name="Pearson M.M."/>
            <person name="Sebaihia M."/>
            <person name="Churcher C."/>
            <person name="Quail M.A."/>
            <person name="Seshasayee A.S."/>
            <person name="Luscombe N.M."/>
            <person name="Abdellah Z."/>
            <person name="Arrosmith C."/>
            <person name="Atkin B."/>
            <person name="Chillingworth T."/>
            <person name="Hauser H."/>
            <person name="Jagels K."/>
            <person name="Moule S."/>
            <person name="Mungall K."/>
            <person name="Norbertczak H."/>
            <person name="Rabbinowitsch E."/>
            <person name="Walker D."/>
            <person name="Whithead S."/>
            <person name="Thomson N.R."/>
            <person name="Rather P.N."/>
            <person name="Parkhill J."/>
            <person name="Mobley H.L.T."/>
        </authorList>
    </citation>
    <scope>NUCLEOTIDE SEQUENCE [LARGE SCALE GENOMIC DNA]</scope>
    <source>
        <strain>HI4320</strain>
    </source>
</reference>
<feature type="chain" id="PRO_1000097683" description="Ribose-5-phosphate isomerase A">
    <location>
        <begin position="1"/>
        <end position="218"/>
    </location>
</feature>
<feature type="active site" description="Proton acceptor" evidence="1">
    <location>
        <position position="103"/>
    </location>
</feature>
<feature type="binding site" evidence="1">
    <location>
        <begin position="28"/>
        <end position="31"/>
    </location>
    <ligand>
        <name>substrate</name>
    </ligand>
</feature>
<feature type="binding site" evidence="1">
    <location>
        <begin position="81"/>
        <end position="84"/>
    </location>
    <ligand>
        <name>substrate</name>
    </ligand>
</feature>
<feature type="binding site" evidence="1">
    <location>
        <begin position="94"/>
        <end position="97"/>
    </location>
    <ligand>
        <name>substrate</name>
    </ligand>
</feature>
<feature type="binding site" evidence="1">
    <location>
        <position position="121"/>
    </location>
    <ligand>
        <name>substrate</name>
    </ligand>
</feature>
<sequence length="218" mass="23187">MTQDELKKAVGWAALEYVKPGTIVGVGTGSTASHFIDALATMKGQIEGAVSSSEASTAKLKSYGIPVFDCNEVDSLDIYVDGADEINHQMQMIKGGGAALTREKIIAAVAKTFVCIVDESKQVDVLGKFPLPVEVIPMARSYVARELVKLGGLPEYRENVVTDNGNVILDVYNLTILNPIELENKINSIAGVVTVGLFANRGADIVLMGTSEGVKTIK</sequence>
<name>RPIA_PROMH</name>